<name>PDS5A_HUMAN</name>
<keyword id="KW-0007">Acetylation</keyword>
<keyword id="KW-0025">Alternative splicing</keyword>
<keyword id="KW-0131">Cell cycle</keyword>
<keyword id="KW-0132">Cell division</keyword>
<keyword id="KW-0498">Mitosis</keyword>
<keyword id="KW-0539">Nucleus</keyword>
<keyword id="KW-0597">Phosphoprotein</keyword>
<keyword id="KW-1267">Proteomics identification</keyword>
<keyword id="KW-1185">Reference proteome</keyword>
<keyword id="KW-0677">Repeat</keyword>
<evidence type="ECO:0000255" key="1"/>
<evidence type="ECO:0000256" key="2">
    <source>
        <dbReference type="SAM" id="MobiDB-lite"/>
    </source>
</evidence>
<evidence type="ECO:0000269" key="3">
    <source>
    </source>
</evidence>
<evidence type="ECO:0000269" key="4">
    <source>
    </source>
</evidence>
<evidence type="ECO:0000269" key="5">
    <source>
    </source>
</evidence>
<evidence type="ECO:0000269" key="6">
    <source>
    </source>
</evidence>
<evidence type="ECO:0000269" key="7">
    <source>
    </source>
</evidence>
<evidence type="ECO:0000269" key="8">
    <source>
    </source>
</evidence>
<evidence type="ECO:0000269" key="9">
    <source>
    </source>
</evidence>
<evidence type="ECO:0000269" key="10">
    <source>
    </source>
</evidence>
<evidence type="ECO:0000269" key="11">
    <source>
    </source>
</evidence>
<evidence type="ECO:0000303" key="12">
    <source>
    </source>
</evidence>
<evidence type="ECO:0000303" key="13">
    <source>
    </source>
</evidence>
<evidence type="ECO:0000303" key="14">
    <source>
    </source>
</evidence>
<evidence type="ECO:0000303" key="15">
    <source>
    </source>
</evidence>
<evidence type="ECO:0000303" key="16">
    <source ref="1"/>
</evidence>
<evidence type="ECO:0000305" key="17"/>
<evidence type="ECO:0000312" key="18">
    <source>
        <dbReference type="EMBL" id="AAH41361.1"/>
    </source>
</evidence>
<evidence type="ECO:0000312" key="19">
    <source>
        <dbReference type="EMBL" id="AAI14219.1"/>
    </source>
</evidence>
<evidence type="ECO:0000312" key="20">
    <source>
        <dbReference type="EMBL" id="AAM82347.1"/>
    </source>
</evidence>
<evidence type="ECO:0000312" key="21">
    <source>
        <dbReference type="EMBL" id="AAT52214.1"/>
    </source>
</evidence>
<evidence type="ECO:0000312" key="22">
    <source>
        <dbReference type="EMBL" id="BAA31623.1"/>
    </source>
</evidence>
<evidence type="ECO:0000312" key="23">
    <source>
        <dbReference type="EMBL" id="BAC05286.1"/>
    </source>
</evidence>
<evidence type="ECO:0000312" key="24">
    <source>
        <dbReference type="HGNC" id="HGNC:29088"/>
    </source>
</evidence>
<evidence type="ECO:0007744" key="25">
    <source>
    </source>
</evidence>
<evidence type="ECO:0007744" key="26">
    <source>
    </source>
</evidence>
<evidence type="ECO:0007744" key="27">
    <source>
    </source>
</evidence>
<evidence type="ECO:0007744" key="28">
    <source>
    </source>
</evidence>
<evidence type="ECO:0007744" key="29">
    <source>
    </source>
</evidence>
<evidence type="ECO:0007744" key="30">
    <source>
    </source>
</evidence>
<evidence type="ECO:0007744" key="31">
    <source>
    </source>
</evidence>
<evidence type="ECO:0007744" key="32">
    <source>
    </source>
</evidence>
<evidence type="ECO:0007744" key="33">
    <source>
    </source>
</evidence>
<evidence type="ECO:0007744" key="34">
    <source>
    </source>
</evidence>
<evidence type="ECO:0007744" key="35">
    <source>
    </source>
</evidence>
<evidence type="ECO:0007744" key="36">
    <source>
    </source>
</evidence>
<accession>Q29RF7</accession>
<accession>Q2TTR5</accession>
<accession>Q68DF7</accession>
<accession>Q8N7J4</accession>
<accession>Q8NG14</accession>
<accession>Q9Y4D4</accession>
<gene>
    <name evidence="24" type="primary">PDS5A</name>
    <name evidence="22" type="synonym">KIAA0648</name>
    <name evidence="12" type="synonym">PDS5</name>
    <name type="ORF">PIG54</name>
</gene>
<comment type="function">
    <text evidence="6 9">Probable regulator of sister chromatid cohesion in mitosis which may stabilize cohesin complex association with chromatin. May couple sister chromatid cohesion during mitosis to DNA replication. Cohesion ensures that chromosome partitioning is accurate in both meiotic and mitotic cells and plays an important role in DNA repair.</text>
</comment>
<comment type="subunit">
    <text evidence="3 6 7 8 9 10">Interacts with the cohesin complex. Interacts with WAPL (via FGF motifs) or CDCA5 (via the FGF motif); the interaction is direct, cohesin-dependent and competitive. Interacts with SMC3. Interacts with TP63.</text>
</comment>
<comment type="interaction">
    <interactant intactId="EBI-1175454">
        <id>Q29RF7</id>
    </interactant>
    <interactant intactId="EBI-718805">
        <id>Q96FF9</id>
        <label>CDCA5</label>
    </interactant>
    <organismsDiffer>false</organismsDiffer>
    <experiments>3</experiments>
</comment>
<comment type="interaction">
    <interactant intactId="EBI-1175454">
        <id>Q29RF7</id>
    </interactant>
    <interactant intactId="EBI-80739">
        <id>O60216</id>
        <label>RAD21</label>
    </interactant>
    <organismsDiffer>false</organismsDiffer>
    <experiments>6</experiments>
</comment>
<comment type="interaction">
    <interactant intactId="EBI-1175454">
        <id>Q29RF7</id>
    </interactant>
    <interactant intactId="EBI-80718">
        <id>Q9UQE7</id>
        <label>SMC3</label>
    </interactant>
    <organismsDiffer>false</organismsDiffer>
    <experiments>4</experiments>
</comment>
<comment type="interaction">
    <interactant intactId="EBI-1175454">
        <id>Q29RF7</id>
    </interactant>
    <interactant intactId="EBI-1175097">
        <id>Q8WVM7</id>
        <label>STAG1</label>
    </interactant>
    <organismsDiffer>false</organismsDiffer>
    <experiments>3</experiments>
</comment>
<comment type="interaction">
    <interactant intactId="EBI-1175454">
        <id>Q29RF7</id>
    </interactant>
    <interactant intactId="EBI-1057252">
        <id>Q8N3U4</id>
        <label>STAG2</label>
    </interactant>
    <organismsDiffer>false</organismsDiffer>
    <experiments>7</experiments>
</comment>
<comment type="interaction">
    <interactant intactId="EBI-12067280">
        <id>Q29RF7-3</id>
    </interactant>
    <interactant intactId="EBI-1955541">
        <id>Q53GS7</id>
        <label>GLE1</label>
    </interactant>
    <organismsDiffer>false</organismsDiffer>
    <experiments>3</experiments>
</comment>
<comment type="interaction">
    <interactant intactId="EBI-12067280">
        <id>Q29RF7-3</id>
    </interactant>
    <interactant intactId="EBI-724076">
        <id>Q99750</id>
        <label>MDFI</label>
    </interactant>
    <organismsDiffer>false</organismsDiffer>
    <experiments>3</experiments>
</comment>
<comment type="interaction">
    <interactant intactId="EBI-12067280">
        <id>Q29RF7-3</id>
    </interactant>
    <interactant intactId="EBI-16439278">
        <id>Q6FHY5</id>
        <label>MEOX2</label>
    </interactant>
    <organismsDiffer>false</organismsDiffer>
    <experiments>3</experiments>
</comment>
<comment type="interaction">
    <interactant intactId="EBI-12067280">
        <id>Q29RF7-3</id>
    </interactant>
    <interactant intactId="EBI-79165">
        <id>Q9NRD5</id>
        <label>PICK1</label>
    </interactant>
    <organismsDiffer>false</organismsDiffer>
    <experiments>3</experiments>
</comment>
<comment type="interaction">
    <interactant intactId="EBI-12067280">
        <id>Q29RF7-3</id>
    </interactant>
    <interactant intactId="EBI-5235340">
        <id>Q7Z699</id>
        <label>SPRED1</label>
    </interactant>
    <organismsDiffer>false</organismsDiffer>
    <experiments>3</experiments>
</comment>
<comment type="subcellular location">
    <subcellularLocation>
        <location evidence="3 4">Nucleus</location>
    </subcellularLocation>
    <text evidence="3 4">Associated with chromatin through most of the cell cycle. Dissociates from chromatin in late prophase, reassociates during late telophase.</text>
</comment>
<comment type="alternative products">
    <event type="alternative splicing"/>
    <isoform>
        <id>Q29RF7-1</id>
        <name evidence="5">1</name>
        <sequence type="displayed"/>
    </isoform>
    <isoform>
        <id>Q29RF7-3</id>
        <name>2</name>
        <sequence type="described" ref="VSP_052491 VSP_052492"/>
    </isoform>
</comment>
<comment type="tissue specificity">
    <text evidence="4">Highest level in colon. Low levels in lung, ovary, breast and kidney. Reduced level in renal tumor tissue. Isoform 2 is expressed in kidney.</text>
</comment>
<comment type="developmental stage">
    <text evidence="4">Cell cycle-regulated with highest level in G2 phase.</text>
</comment>
<comment type="miscellaneous">
    <text evidence="6">HeLa cells with a reduced level of PDS5A show a mild defect in sister chromatid cohesion. HeLa cells with a reduced level of RAD21 show reduced association of PDS5A with chromatin.</text>
</comment>
<comment type="similarity">
    <text evidence="17">Belongs to the PDS5 family.</text>
</comment>
<comment type="sequence caution" evidence="17">
    <conflict type="erroneous initiation">
        <sequence resource="EMBL-CDS" id="AAI26226"/>
    </conflict>
    <text>Truncated N-terminus.</text>
</comment>
<comment type="sequence caution" evidence="17">
    <conflict type="miscellaneous discrepancy">
        <sequence resource="EMBL-CDS" id="AAM82347"/>
    </conflict>
    <text>Probable cloning artifact.</text>
</comment>
<comment type="sequence caution" evidence="17">
    <conflict type="erroneous initiation">
        <sequence resource="EMBL-CDS" id="CAH18263"/>
    </conflict>
    <text>Truncated N-terminus.</text>
</comment>
<reference evidence="17 21" key="1">
    <citation type="submission" date="2004-02" db="EMBL/GenBank/DDBJ databases">
        <title>Identification of a human cell proliferation inducing gene.</title>
        <authorList>
            <person name="Kim J.W."/>
        </authorList>
    </citation>
    <scope>NUCLEOTIDE SEQUENCE [LARGE SCALE MRNA] (ISOFORM 2)</scope>
</reference>
<reference evidence="17 23" key="2">
    <citation type="journal article" date="2004" name="Nat. Genet.">
        <title>Complete sequencing and characterization of 21,243 full-length human cDNAs.</title>
        <authorList>
            <person name="Ota T."/>
            <person name="Suzuki Y."/>
            <person name="Nishikawa T."/>
            <person name="Otsuki T."/>
            <person name="Sugiyama T."/>
            <person name="Irie R."/>
            <person name="Wakamatsu A."/>
            <person name="Hayashi K."/>
            <person name="Sato H."/>
            <person name="Nagai K."/>
            <person name="Kimura K."/>
            <person name="Makita H."/>
            <person name="Sekine M."/>
            <person name="Obayashi M."/>
            <person name="Nishi T."/>
            <person name="Shibahara T."/>
            <person name="Tanaka T."/>
            <person name="Ishii S."/>
            <person name="Yamamoto J."/>
            <person name="Saito K."/>
            <person name="Kawai Y."/>
            <person name="Isono Y."/>
            <person name="Nakamura Y."/>
            <person name="Nagahari K."/>
            <person name="Murakami K."/>
            <person name="Yasuda T."/>
            <person name="Iwayanagi T."/>
            <person name="Wagatsuma M."/>
            <person name="Shiratori A."/>
            <person name="Sudo H."/>
            <person name="Hosoiri T."/>
            <person name="Kaku Y."/>
            <person name="Kodaira H."/>
            <person name="Kondo H."/>
            <person name="Sugawara M."/>
            <person name="Takahashi M."/>
            <person name="Kanda K."/>
            <person name="Yokoi T."/>
            <person name="Furuya T."/>
            <person name="Kikkawa E."/>
            <person name="Omura Y."/>
            <person name="Abe K."/>
            <person name="Kamihara K."/>
            <person name="Katsuta N."/>
            <person name="Sato K."/>
            <person name="Tanikawa M."/>
            <person name="Yamazaki M."/>
            <person name="Ninomiya K."/>
            <person name="Ishibashi T."/>
            <person name="Yamashita H."/>
            <person name="Murakawa K."/>
            <person name="Fujimori K."/>
            <person name="Tanai H."/>
            <person name="Kimata M."/>
            <person name="Watanabe M."/>
            <person name="Hiraoka S."/>
            <person name="Chiba Y."/>
            <person name="Ishida S."/>
            <person name="Ono Y."/>
            <person name="Takiguchi S."/>
            <person name="Watanabe S."/>
            <person name="Yosida M."/>
            <person name="Hotuta T."/>
            <person name="Kusano J."/>
            <person name="Kanehori K."/>
            <person name="Takahashi-Fujii A."/>
            <person name="Hara H."/>
            <person name="Tanase T.-O."/>
            <person name="Nomura Y."/>
            <person name="Togiya S."/>
            <person name="Komai F."/>
            <person name="Hara R."/>
            <person name="Takeuchi K."/>
            <person name="Arita M."/>
            <person name="Imose N."/>
            <person name="Musashino K."/>
            <person name="Yuuki H."/>
            <person name="Oshima A."/>
            <person name="Sasaki N."/>
            <person name="Aotsuka S."/>
            <person name="Yoshikawa Y."/>
            <person name="Matsunawa H."/>
            <person name="Ichihara T."/>
            <person name="Shiohata N."/>
            <person name="Sano S."/>
            <person name="Moriya S."/>
            <person name="Momiyama H."/>
            <person name="Satoh N."/>
            <person name="Takami S."/>
            <person name="Terashima Y."/>
            <person name="Suzuki O."/>
            <person name="Nakagawa S."/>
            <person name="Senoh A."/>
            <person name="Mizoguchi H."/>
            <person name="Goto Y."/>
            <person name="Shimizu F."/>
            <person name="Wakebe H."/>
            <person name="Hishigaki H."/>
            <person name="Watanabe T."/>
            <person name="Sugiyama A."/>
            <person name="Takemoto M."/>
            <person name="Kawakami B."/>
            <person name="Yamazaki M."/>
            <person name="Watanabe K."/>
            <person name="Kumagai A."/>
            <person name="Itakura S."/>
            <person name="Fukuzumi Y."/>
            <person name="Fujimori Y."/>
            <person name="Komiyama M."/>
            <person name="Tashiro H."/>
            <person name="Tanigami A."/>
            <person name="Fujiwara T."/>
            <person name="Ono T."/>
            <person name="Yamada K."/>
            <person name="Fujii Y."/>
            <person name="Ozaki K."/>
            <person name="Hirao M."/>
            <person name="Ohmori Y."/>
            <person name="Kawabata A."/>
            <person name="Hikiji T."/>
            <person name="Kobatake N."/>
            <person name="Inagaki H."/>
            <person name="Ikema Y."/>
            <person name="Okamoto S."/>
            <person name="Okitani R."/>
            <person name="Kawakami T."/>
            <person name="Noguchi S."/>
            <person name="Itoh T."/>
            <person name="Shigeta K."/>
            <person name="Senba T."/>
            <person name="Matsumura K."/>
            <person name="Nakajima Y."/>
            <person name="Mizuno T."/>
            <person name="Morinaga M."/>
            <person name="Sasaki M."/>
            <person name="Togashi T."/>
            <person name="Oyama M."/>
            <person name="Hata H."/>
            <person name="Watanabe M."/>
            <person name="Komatsu T."/>
            <person name="Mizushima-Sugano J."/>
            <person name="Satoh T."/>
            <person name="Shirai Y."/>
            <person name="Takahashi Y."/>
            <person name="Nakagawa K."/>
            <person name="Okumura K."/>
            <person name="Nagase T."/>
            <person name="Nomura N."/>
            <person name="Kikuchi H."/>
            <person name="Masuho Y."/>
            <person name="Yamashita R."/>
            <person name="Nakai K."/>
            <person name="Yada T."/>
            <person name="Nakamura Y."/>
            <person name="Ohara O."/>
            <person name="Isogai T."/>
            <person name="Sugano S."/>
        </authorList>
    </citation>
    <scope>NUCLEOTIDE SEQUENCE [LARGE SCALE MRNA] (ISOFORM 2)</scope>
    <source>
        <tissue evidence="23">Uterus</tissue>
    </source>
</reference>
<reference evidence="17 19" key="3">
    <citation type="journal article" date="2004" name="Genome Res.">
        <title>The status, quality, and expansion of the NIH full-length cDNA project: the Mammalian Gene Collection (MGC).</title>
        <authorList>
            <consortium name="The MGC Project Team"/>
        </authorList>
    </citation>
    <scope>NUCLEOTIDE SEQUENCE [LARGE SCALE MRNA] (ISOFORMS 1 AND 2)</scope>
    <source>
        <tissue evidence="19">Eye</tissue>
        <tissue evidence="18">Testis</tissue>
    </source>
</reference>
<reference evidence="17 20" key="4">
    <citation type="journal article" date="2004" name="Gene">
        <title>SCC-112, a novel cell cycle-regulated molecule, exhibits reduced expression in human renal carcinomas.</title>
        <authorList>
            <person name="Kumar D."/>
            <person name="Sakabe I."/>
            <person name="Patel S."/>
            <person name="Zhang Y."/>
            <person name="Ahmad I."/>
            <person name="Gehan E.A."/>
            <person name="Whiteside T.L."/>
            <person name="Kasid U."/>
        </authorList>
    </citation>
    <scope>NUCLEOTIDE SEQUENCE [MRNA] OF 22-1337 (ISOFORM 1)</scope>
    <scope>SUBCELLULAR LOCATION</scope>
    <scope>TISSUE SPECIFICITY</scope>
    <scope>DEVELOPMENTAL STAGE</scope>
</reference>
<reference key="5">
    <citation type="journal article" date="2007" name="BMC Genomics">
        <title>The full-ORF clone resource of the German cDNA consortium.</title>
        <authorList>
            <person name="Bechtel S."/>
            <person name="Rosenfelder H."/>
            <person name="Duda A."/>
            <person name="Schmidt C.P."/>
            <person name="Ernst U."/>
            <person name="Wellenreuther R."/>
            <person name="Mehrle A."/>
            <person name="Schuster C."/>
            <person name="Bahr A."/>
            <person name="Bloecker H."/>
            <person name="Heubner D."/>
            <person name="Hoerlein A."/>
            <person name="Michel G."/>
            <person name="Wedler H."/>
            <person name="Koehrer K."/>
            <person name="Ottenwaelder B."/>
            <person name="Poustka A."/>
            <person name="Wiemann S."/>
            <person name="Schupp I."/>
        </authorList>
    </citation>
    <scope>NUCLEOTIDE SEQUENCE [LARGE SCALE MRNA] OF 32-1337 (ISOFORM 2)</scope>
    <source>
        <tissue>Salivary gland</tissue>
    </source>
</reference>
<reference evidence="22" key="6">
    <citation type="journal article" date="1998" name="DNA Res.">
        <title>Prediction of the coding sequences of unidentified human genes. X. The complete sequences of 100 new cDNA clones from brain which can code for large proteins in vitro.</title>
        <authorList>
            <person name="Ishikawa K."/>
            <person name="Nagase T."/>
            <person name="Suyama M."/>
            <person name="Miyajima N."/>
            <person name="Tanaka A."/>
            <person name="Kotani H."/>
            <person name="Nomura N."/>
            <person name="Ohara O."/>
        </authorList>
    </citation>
    <scope>NUCLEOTIDE SEQUENCE [LARGE SCALE MRNA] OF 487-1337 (ISOFORM 1)</scope>
    <source>
        <tissue evidence="22">Brain</tissue>
    </source>
</reference>
<reference evidence="17" key="7">
    <citation type="journal article" date="2000" name="J. Cell Biol.">
        <title>Characterization of vertebrate cohesin complexes and their regulation in prophase.</title>
        <authorList>
            <person name="Sumara I."/>
            <person name="Vorlaufer E."/>
            <person name="Gieffers C."/>
            <person name="Peters B.H."/>
            <person name="Peters J.-M."/>
        </authorList>
    </citation>
    <scope>SUBCELLULAR LOCATION</scope>
    <scope>INTERACTION WITH THE COHESIN COMPLEX</scope>
</reference>
<reference evidence="17" key="8">
    <citation type="journal article" date="2005" name="J. Cell Sci.">
        <title>Functional contribution of Pds5 to cohesin-mediated cohesion in human cells and Xenopus egg extracts.</title>
        <authorList>
            <person name="Losada A."/>
            <person name="Yokochi T."/>
            <person name="Hirano T."/>
        </authorList>
    </citation>
    <scope>FUNCTION</scope>
    <scope>INTERACTION WITH CHROMATIN</scope>
</reference>
<reference key="9">
    <citation type="journal article" date="2006" name="Cell">
        <title>Global, in vivo, and site-specific phosphorylation dynamics in signaling networks.</title>
        <authorList>
            <person name="Olsen J.V."/>
            <person name="Blagoev B."/>
            <person name="Gnad F."/>
            <person name="Macek B."/>
            <person name="Kumar C."/>
            <person name="Mortensen P."/>
            <person name="Mann M."/>
        </authorList>
    </citation>
    <scope>PHOSPHORYLATION [LARGE SCALE ANALYSIS] AT SER-1305</scope>
    <scope>IDENTIFICATION BY MASS SPECTROMETRY [LARGE SCALE ANALYSIS]</scope>
    <source>
        <tissue>Cervix carcinoma</tissue>
    </source>
</reference>
<reference key="10">
    <citation type="journal article" date="2006" name="Cell">
        <title>Wapl controls the dynamic association of cohesin with chromatin.</title>
        <authorList>
            <person name="Kueng S."/>
            <person name="Hegemann B."/>
            <person name="Peters B.H."/>
            <person name="Lipp J.J."/>
            <person name="Schleiffer A."/>
            <person name="Mechtler K."/>
            <person name="Peters J.M."/>
        </authorList>
    </citation>
    <scope>INTERACTION WITH WAPL</scope>
</reference>
<reference key="11">
    <citation type="journal article" date="2006" name="Nat. Biotechnol.">
        <title>A probability-based approach for high-throughput protein phosphorylation analysis and site localization.</title>
        <authorList>
            <person name="Beausoleil S.A."/>
            <person name="Villen J."/>
            <person name="Gerber S.A."/>
            <person name="Rush J."/>
            <person name="Gygi S.P."/>
        </authorList>
    </citation>
    <scope>PHOSPHORYLATION [LARGE SCALE ANALYSIS] AT SER-1305</scope>
    <scope>IDENTIFICATION BY MASS SPECTROMETRY [LARGE SCALE ANALYSIS]</scope>
    <source>
        <tissue>Cervix carcinoma</tissue>
    </source>
</reference>
<reference key="12">
    <citation type="journal article" date="2007" name="J. Proteome Res.">
        <title>Improved titanium dioxide enrichment of phosphopeptides from HeLa cells and high confident phosphopeptide identification by cross-validation of MS/MS and MS/MS/MS spectra.</title>
        <authorList>
            <person name="Yu L.R."/>
            <person name="Zhu Z."/>
            <person name="Chan K.C."/>
            <person name="Issaq H.J."/>
            <person name="Dimitrov D.S."/>
            <person name="Veenstra T.D."/>
        </authorList>
    </citation>
    <scope>PHOSPHORYLATION [LARGE SCALE ANALYSIS] AT SER-1305</scope>
    <scope>IDENTIFICATION BY MASS SPECTROMETRY [LARGE SCALE ANALYSIS]</scope>
    <source>
        <tissue>Cervix carcinoma</tissue>
    </source>
</reference>
<reference key="13">
    <citation type="journal article" date="2008" name="J. Cancer Res. Clin. Oncol.">
        <title>SCC-112 gene is involved in tumor progression and promotes the cell proliferation in G2/M phase.</title>
        <authorList>
            <person name="Zheng M.Z."/>
            <person name="Zheng L.M."/>
            <person name="Zeng Y.X."/>
        </authorList>
    </citation>
    <scope>INTERACTION WITH TP63</scope>
</reference>
<reference key="14">
    <citation type="journal article" date="2008" name="Mol. Cell">
        <title>Kinase-selective enrichment enables quantitative phosphoproteomics of the kinome across the cell cycle.</title>
        <authorList>
            <person name="Daub H."/>
            <person name="Olsen J.V."/>
            <person name="Bairlein M."/>
            <person name="Gnad F."/>
            <person name="Oppermann F.S."/>
            <person name="Korner R."/>
            <person name="Greff Z."/>
            <person name="Keri G."/>
            <person name="Stemmann O."/>
            <person name="Mann M."/>
        </authorList>
    </citation>
    <scope>PHOSPHORYLATION [LARGE SCALE ANALYSIS] AT SER-1305</scope>
    <scope>IDENTIFICATION BY MASS SPECTROMETRY [LARGE SCALE ANALYSIS]</scope>
    <source>
        <tissue>Cervix carcinoma</tissue>
    </source>
</reference>
<reference key="15">
    <citation type="journal article" date="2008" name="Proc. Natl. Acad. Sci. U.S.A.">
        <title>A quantitative atlas of mitotic phosphorylation.</title>
        <authorList>
            <person name="Dephoure N."/>
            <person name="Zhou C."/>
            <person name="Villen J."/>
            <person name="Beausoleil S.A."/>
            <person name="Bakalarski C.E."/>
            <person name="Elledge S.J."/>
            <person name="Gygi S.P."/>
        </authorList>
    </citation>
    <scope>PHOSPHORYLATION [LARGE SCALE ANALYSIS] AT SER-1195 AND THR-1208</scope>
    <scope>IDENTIFICATION BY MASS SPECTROMETRY [LARGE SCALE ANALYSIS]</scope>
    <source>
        <tissue>Cervix carcinoma</tissue>
    </source>
</reference>
<reference key="16">
    <citation type="journal article" date="2009" name="Anal. Chem.">
        <title>Lys-N and trypsin cover complementary parts of the phosphoproteome in a refined SCX-based approach.</title>
        <authorList>
            <person name="Gauci S."/>
            <person name="Helbig A.O."/>
            <person name="Slijper M."/>
            <person name="Krijgsveld J."/>
            <person name="Heck A.J."/>
            <person name="Mohammed S."/>
        </authorList>
    </citation>
    <scope>ACETYLATION [LARGE SCALE ANALYSIS] AT MET-1</scope>
    <scope>IDENTIFICATION BY MASS SPECTROMETRY [LARGE SCALE ANALYSIS]</scope>
</reference>
<reference key="17">
    <citation type="journal article" date="2009" name="Nature">
        <title>Cohesin acetylation speeds the replication fork.</title>
        <authorList>
            <person name="Terret M.E."/>
            <person name="Sherwood R."/>
            <person name="Rahman S."/>
            <person name="Qin J."/>
            <person name="Jallepalli P.V."/>
        </authorList>
    </citation>
    <scope>FUNCTION</scope>
    <scope>INTERACTION WITH SMC3</scope>
</reference>
<reference key="18">
    <citation type="journal article" date="2009" name="Sci. Signal.">
        <title>Quantitative phosphoproteomic analysis of T cell receptor signaling reveals system-wide modulation of protein-protein interactions.</title>
        <authorList>
            <person name="Mayya V."/>
            <person name="Lundgren D.H."/>
            <person name="Hwang S.-I."/>
            <person name="Rezaul K."/>
            <person name="Wu L."/>
            <person name="Eng J.K."/>
            <person name="Rodionov V."/>
            <person name="Han D.K."/>
        </authorList>
    </citation>
    <scope>PHOSPHORYLATION [LARGE SCALE ANALYSIS] AT SER-1195</scope>
    <scope>IDENTIFICATION BY MASS SPECTROMETRY [LARGE SCALE ANALYSIS]</scope>
    <source>
        <tissue>Leukemic T-cell</tissue>
    </source>
</reference>
<reference key="19">
    <citation type="journal article" date="2009" name="Science">
        <title>Lysine acetylation targets protein complexes and co-regulates major cellular functions.</title>
        <authorList>
            <person name="Choudhary C."/>
            <person name="Kumar C."/>
            <person name="Gnad F."/>
            <person name="Nielsen M.L."/>
            <person name="Rehman M."/>
            <person name="Walther T.C."/>
            <person name="Olsen J.V."/>
            <person name="Mann M."/>
        </authorList>
    </citation>
    <scope>ACETYLATION [LARGE SCALE ANALYSIS] AT LYS-1146; LYS-1211 AND LYS-1290</scope>
    <scope>IDENTIFICATION BY MASS SPECTROMETRY [LARGE SCALE ANALYSIS]</scope>
</reference>
<reference key="20">
    <citation type="journal article" date="2010" name="Cell">
        <title>Sororin mediates sister chromatid cohesion by antagonizing wapl.</title>
        <authorList>
            <person name="Nishiyama T."/>
            <person name="Ladurner R."/>
            <person name="Schmitz J."/>
            <person name="Kreidl E."/>
            <person name="Schleiffer A."/>
            <person name="Bhaskara V."/>
            <person name="Bando M."/>
            <person name="Shirahige K."/>
            <person name="Hyman A.A."/>
            <person name="Mechtler K."/>
            <person name="Peters J.M."/>
        </authorList>
    </citation>
    <scope>INTERACTION WITH WAPL AND CDCA5</scope>
</reference>
<reference key="21">
    <citation type="journal article" date="2010" name="Sci. Signal.">
        <title>Quantitative phosphoproteomics reveals widespread full phosphorylation site occupancy during mitosis.</title>
        <authorList>
            <person name="Olsen J.V."/>
            <person name="Vermeulen M."/>
            <person name="Santamaria A."/>
            <person name="Kumar C."/>
            <person name="Miller M.L."/>
            <person name="Jensen L.J."/>
            <person name="Gnad F."/>
            <person name="Cox J."/>
            <person name="Jensen T.S."/>
            <person name="Nigg E.A."/>
            <person name="Brunak S."/>
            <person name="Mann M."/>
        </authorList>
    </citation>
    <scope>PHOSPHORYLATION [LARGE SCALE ANALYSIS] AT SER-1195; THR-1208 AND SER-1305</scope>
    <scope>IDENTIFICATION BY MASS SPECTROMETRY [LARGE SCALE ANALYSIS]</scope>
    <source>
        <tissue>Cervix carcinoma</tissue>
    </source>
</reference>
<reference key="22">
    <citation type="journal article" date="2011" name="BMC Syst. Biol.">
        <title>Initial characterization of the human central proteome.</title>
        <authorList>
            <person name="Burkard T.R."/>
            <person name="Planyavsky M."/>
            <person name="Kaupe I."/>
            <person name="Breitwieser F.P."/>
            <person name="Buerckstuemmer T."/>
            <person name="Bennett K.L."/>
            <person name="Superti-Furga G."/>
            <person name="Colinge J."/>
        </authorList>
    </citation>
    <scope>IDENTIFICATION BY MASS SPECTROMETRY [LARGE SCALE ANALYSIS]</scope>
</reference>
<reference key="23">
    <citation type="journal article" date="2011" name="Sci. Signal.">
        <title>System-wide temporal characterization of the proteome and phosphoproteome of human embryonic stem cell differentiation.</title>
        <authorList>
            <person name="Rigbolt K.T."/>
            <person name="Prokhorova T.A."/>
            <person name="Akimov V."/>
            <person name="Henningsen J."/>
            <person name="Johansen P.T."/>
            <person name="Kratchmarova I."/>
            <person name="Kassem M."/>
            <person name="Mann M."/>
            <person name="Olsen J.V."/>
            <person name="Blagoev B."/>
        </authorList>
    </citation>
    <scope>PHOSPHORYLATION [LARGE SCALE ANALYSIS] AT SER-1305</scope>
    <scope>IDENTIFICATION BY MASS SPECTROMETRY [LARGE SCALE ANALYSIS]</scope>
</reference>
<reference key="24">
    <citation type="journal article" date="2013" name="J. Proteome Res.">
        <title>Toward a comprehensive characterization of a human cancer cell phosphoproteome.</title>
        <authorList>
            <person name="Zhou H."/>
            <person name="Di Palma S."/>
            <person name="Preisinger C."/>
            <person name="Peng M."/>
            <person name="Polat A.N."/>
            <person name="Heck A.J."/>
            <person name="Mohammed S."/>
        </authorList>
    </citation>
    <scope>PHOSPHORYLATION [LARGE SCALE ANALYSIS] AT SER-1097; SER-1195; THR-1208 AND SER-1305</scope>
    <scope>IDENTIFICATION BY MASS SPECTROMETRY [LARGE SCALE ANALYSIS]</scope>
    <source>
        <tissue>Cervix carcinoma</tissue>
        <tissue>Erythroleukemia</tissue>
    </source>
</reference>
<reference key="25">
    <citation type="journal article" date="2014" name="J. Proteomics">
        <title>An enzyme assisted RP-RPLC approach for in-depth analysis of human liver phosphoproteome.</title>
        <authorList>
            <person name="Bian Y."/>
            <person name="Song C."/>
            <person name="Cheng K."/>
            <person name="Dong M."/>
            <person name="Wang F."/>
            <person name="Huang J."/>
            <person name="Sun D."/>
            <person name="Wang L."/>
            <person name="Ye M."/>
            <person name="Zou H."/>
        </authorList>
    </citation>
    <scope>PHOSPHORYLATION [LARGE SCALE ANALYSIS] AT THR-1208</scope>
    <scope>IDENTIFICATION BY MASS SPECTROMETRY [LARGE SCALE ANALYSIS]</scope>
    <source>
        <tissue>Liver</tissue>
    </source>
</reference>
<reference key="26">
    <citation type="journal article" date="2019" name="Genet. Med.">
        <title>Clinical exome sequencing reveals locus heterogeneity and phenotypic variability of cohesinopathies.</title>
        <authorList>
            <consortium name="DDD Study"/>
            <person name="Yuan B."/>
            <person name="Neira J."/>
            <person name="Pehlivan D."/>
            <person name="Santiago-Sim T."/>
            <person name="Song X."/>
            <person name="Rosenfeld J."/>
            <person name="Posey J.E."/>
            <person name="Patel V."/>
            <person name="Jin W."/>
            <person name="Adam M.P."/>
            <person name="Baple E.L."/>
            <person name="Dean J."/>
            <person name="Fong C.T."/>
            <person name="Hickey S.E."/>
            <person name="Hudgins L."/>
            <person name="Leon E."/>
            <person name="Madan-Khetarpal S."/>
            <person name="Rawlins L."/>
            <person name="Rustad C.F."/>
            <person name="Stray-Pedersen A."/>
            <person name="Tveten K."/>
            <person name="Wenger O."/>
            <person name="Diaz J."/>
            <person name="Jenkins L."/>
            <person name="Martin L."/>
            <person name="McGuire M."/>
            <person name="Pietryga M."/>
            <person name="Ramsdell L."/>
            <person name="Slattery L."/>
            <person name="Abid F."/>
            <person name="Bertuch A.A."/>
            <person name="Grange D."/>
            <person name="Immken L."/>
            <person name="Schaaf C.P."/>
            <person name="Van Esch H."/>
            <person name="Bi W."/>
            <person name="Cheung S.W."/>
            <person name="Breman A.M."/>
            <person name="Smith J.L."/>
            <person name="Shaw C."/>
            <person name="Crosby A.H."/>
            <person name="Eng C."/>
            <person name="Yang Y."/>
            <person name="Lupski J.R."/>
            <person name="Xiao R."/>
            <person name="Liu P."/>
        </authorList>
    </citation>
    <scope>VARIANT 759-GLU--ARG-1337 DEL</scope>
</reference>
<feature type="chain" id="PRO_0000296341" description="Sister chromatid cohesion protein PDS5 homolog A">
    <location>
        <begin position="1"/>
        <end position="1337"/>
    </location>
</feature>
<feature type="repeat" description="HEAT" evidence="1">
    <location>
        <begin position="393"/>
        <end position="429"/>
    </location>
</feature>
<feature type="region of interest" description="Disordered" evidence="2">
    <location>
        <begin position="1150"/>
        <end position="1337"/>
    </location>
</feature>
<feature type="compositionally biased region" description="Polar residues" evidence="2">
    <location>
        <begin position="1159"/>
        <end position="1180"/>
    </location>
</feature>
<feature type="compositionally biased region" description="Polar residues" evidence="2">
    <location>
        <begin position="1223"/>
        <end position="1233"/>
    </location>
</feature>
<feature type="compositionally biased region" description="Basic and acidic residues" evidence="2">
    <location>
        <begin position="1321"/>
        <end position="1337"/>
    </location>
</feature>
<feature type="modified residue" description="N-acetylmethionine" evidence="30">
    <location>
        <position position="1"/>
    </location>
</feature>
<feature type="modified residue" description="Phosphoserine" evidence="35">
    <location>
        <position position="1097"/>
    </location>
</feature>
<feature type="modified residue" description="N6-acetyllysine" evidence="31">
    <location>
        <position position="1146"/>
    </location>
</feature>
<feature type="modified residue" description="Phosphoserine" evidence="28 32 33 35">
    <location>
        <position position="1195"/>
    </location>
</feature>
<feature type="modified residue" description="Phosphothreonine" evidence="28 33 35 36">
    <location>
        <position position="1208"/>
    </location>
</feature>
<feature type="modified residue" description="N6-acetyllysine" evidence="31">
    <location>
        <position position="1211"/>
    </location>
</feature>
<feature type="modified residue" description="N6-acetyllysine" evidence="31">
    <location>
        <position position="1290"/>
    </location>
</feature>
<feature type="modified residue" description="Phosphoserine" evidence="25 26 27 29 33 34 35">
    <location>
        <position position="1305"/>
    </location>
</feature>
<feature type="splice variant" id="VSP_052491" description="In isoform 2." evidence="13 14 15 16">
    <original>REIARKLANP</original>
    <variation>VSKSYFTLFL</variation>
    <location>
        <begin position="591"/>
        <end position="600"/>
    </location>
</feature>
<feature type="splice variant" id="VSP_052492" description="In isoform 2." evidence="13 14 15 16">
    <location>
        <begin position="601"/>
        <end position="1337"/>
    </location>
</feature>
<feature type="sequence variant" id="VAR_082313" description="Found in a patient with cohesinopathy; uncertain significance." evidence="11">
    <location>
        <begin position="759"/>
        <end position="1337"/>
    </location>
</feature>
<feature type="sequence conflict" description="In Ref. 4; AAM82347." evidence="17" ref="4">
    <original>D</original>
    <variation>G</variation>
    <location>
        <position position="207"/>
    </location>
</feature>
<feature type="sequence conflict" description="In Ref. 1; AAT52214." evidence="17" ref="1">
    <original>Q</original>
    <variation>R</variation>
    <location>
        <position position="471"/>
    </location>
</feature>
<dbReference type="EMBL" id="AY550968">
    <property type="protein sequence ID" value="AAT52214.1"/>
    <property type="molecule type" value="mRNA"/>
</dbReference>
<dbReference type="EMBL" id="AK098331">
    <property type="protein sequence ID" value="BAC05286.1"/>
    <property type="molecule type" value="mRNA"/>
</dbReference>
<dbReference type="EMBL" id="BC041361">
    <property type="protein sequence ID" value="AAH41361.1"/>
    <property type="molecule type" value="mRNA"/>
</dbReference>
<dbReference type="EMBL" id="BC114218">
    <property type="protein sequence ID" value="AAI14219.1"/>
    <property type="molecule type" value="mRNA"/>
</dbReference>
<dbReference type="EMBL" id="BC126225">
    <property type="protein sequence ID" value="AAI26226.1"/>
    <property type="status" value="ALT_INIT"/>
    <property type="molecule type" value="mRNA"/>
</dbReference>
<dbReference type="EMBL" id="AF294791">
    <property type="protein sequence ID" value="AAM82347.1"/>
    <property type="status" value="ALT_SEQ"/>
    <property type="molecule type" value="mRNA"/>
</dbReference>
<dbReference type="EMBL" id="CR749425">
    <property type="protein sequence ID" value="CAH18263.1"/>
    <property type="status" value="ALT_INIT"/>
    <property type="molecule type" value="mRNA"/>
</dbReference>
<dbReference type="EMBL" id="AB014548">
    <property type="protein sequence ID" value="BAA31623.1"/>
    <property type="molecule type" value="mRNA"/>
</dbReference>
<dbReference type="CCDS" id="CCDS47045.1">
    <molecule id="Q29RF7-1"/>
</dbReference>
<dbReference type="CCDS" id="CCDS54759.1">
    <molecule id="Q29RF7-3"/>
</dbReference>
<dbReference type="RefSeq" id="NP_001093869.1">
    <molecule id="Q29RF7-1"/>
    <property type="nucleotide sequence ID" value="NM_001100399.2"/>
</dbReference>
<dbReference type="RefSeq" id="NP_001093870.1">
    <molecule id="Q29RF7-3"/>
    <property type="nucleotide sequence ID" value="NM_001100400.2"/>
</dbReference>
<dbReference type="RefSeq" id="XP_011511974.1">
    <molecule id="Q29RF7-1"/>
    <property type="nucleotide sequence ID" value="XM_011513672.3"/>
</dbReference>
<dbReference type="RefSeq" id="XP_016863417.1">
    <property type="nucleotide sequence ID" value="XM_017007928.1"/>
</dbReference>
<dbReference type="RefSeq" id="XP_047305887.1">
    <molecule id="Q29RF7-1"/>
    <property type="nucleotide sequence ID" value="XM_047449931.1"/>
</dbReference>
<dbReference type="RefSeq" id="XP_054205431.1">
    <molecule id="Q29RF7-1"/>
    <property type="nucleotide sequence ID" value="XM_054349456.1"/>
</dbReference>
<dbReference type="RefSeq" id="XP_054205432.1">
    <molecule id="Q29RF7-1"/>
    <property type="nucleotide sequence ID" value="XM_054349457.1"/>
</dbReference>
<dbReference type="SMR" id="Q29RF7"/>
<dbReference type="BioGRID" id="116848">
    <property type="interactions" value="289"/>
</dbReference>
<dbReference type="CORUM" id="Q29RF7"/>
<dbReference type="DIP" id="DIP-35419N"/>
<dbReference type="FunCoup" id="Q29RF7">
    <property type="interactions" value="4259"/>
</dbReference>
<dbReference type="IntAct" id="Q29RF7">
    <property type="interactions" value="135"/>
</dbReference>
<dbReference type="MINT" id="Q29RF7"/>
<dbReference type="STRING" id="9606.ENSP00000303427"/>
<dbReference type="GlyGen" id="Q29RF7">
    <property type="glycosylation" value="3 sites, 1 O-linked glycan (3 sites)"/>
</dbReference>
<dbReference type="iPTMnet" id="Q29RF7"/>
<dbReference type="MetOSite" id="Q29RF7"/>
<dbReference type="PhosphoSitePlus" id="Q29RF7"/>
<dbReference type="SwissPalm" id="Q29RF7"/>
<dbReference type="BioMuta" id="PDS5A"/>
<dbReference type="DMDM" id="121947590"/>
<dbReference type="jPOST" id="Q29RF7"/>
<dbReference type="MassIVE" id="Q29RF7"/>
<dbReference type="PaxDb" id="9606-ENSP00000303427"/>
<dbReference type="PeptideAtlas" id="Q29RF7"/>
<dbReference type="ProteomicsDB" id="61286">
    <molecule id="Q29RF7-1"/>
</dbReference>
<dbReference type="ProteomicsDB" id="61287">
    <molecule id="Q29RF7-3"/>
</dbReference>
<dbReference type="Pumba" id="Q29RF7"/>
<dbReference type="Antibodypedia" id="23497">
    <property type="antibodies" value="228 antibodies from 27 providers"/>
</dbReference>
<dbReference type="DNASU" id="23244"/>
<dbReference type="Ensembl" id="ENST00000303538.13">
    <molecule id="Q29RF7-1"/>
    <property type="protein sequence ID" value="ENSP00000303427.8"/>
    <property type="gene ID" value="ENSG00000121892.15"/>
</dbReference>
<dbReference type="Ensembl" id="ENST00000503396.5">
    <molecule id="Q29RF7-3"/>
    <property type="protein sequence ID" value="ENSP00000426749.1"/>
    <property type="gene ID" value="ENSG00000121892.15"/>
</dbReference>
<dbReference type="GeneID" id="23244"/>
<dbReference type="KEGG" id="hsa:23244"/>
<dbReference type="MANE-Select" id="ENST00000303538.13">
    <property type="protein sequence ID" value="ENSP00000303427.8"/>
    <property type="RefSeq nucleotide sequence ID" value="NM_001100399.2"/>
    <property type="RefSeq protein sequence ID" value="NP_001093869.1"/>
</dbReference>
<dbReference type="UCSC" id="uc003guv.4">
    <molecule id="Q29RF7-1"/>
    <property type="organism name" value="human"/>
</dbReference>
<dbReference type="AGR" id="HGNC:29088"/>
<dbReference type="CTD" id="23244"/>
<dbReference type="DisGeNET" id="23244"/>
<dbReference type="GeneCards" id="PDS5A"/>
<dbReference type="HGNC" id="HGNC:29088">
    <property type="gene designation" value="PDS5A"/>
</dbReference>
<dbReference type="HPA" id="ENSG00000121892">
    <property type="expression patterns" value="Low tissue specificity"/>
</dbReference>
<dbReference type="MIM" id="613200">
    <property type="type" value="gene"/>
</dbReference>
<dbReference type="neXtProt" id="NX_Q29RF7"/>
<dbReference type="OpenTargets" id="ENSG00000121892"/>
<dbReference type="PharmGKB" id="PA162399027"/>
<dbReference type="VEuPathDB" id="HostDB:ENSG00000121892"/>
<dbReference type="eggNOG" id="KOG1525">
    <property type="taxonomic scope" value="Eukaryota"/>
</dbReference>
<dbReference type="GeneTree" id="ENSGT00940000155155"/>
<dbReference type="HOGENOM" id="CLU_004041_0_0_1"/>
<dbReference type="InParanoid" id="Q29RF7"/>
<dbReference type="OMA" id="EKWEIVA"/>
<dbReference type="OrthoDB" id="200660at2759"/>
<dbReference type="PAN-GO" id="Q29RF7">
    <property type="GO annotations" value="4 GO annotations based on evolutionary models"/>
</dbReference>
<dbReference type="PhylomeDB" id="Q29RF7"/>
<dbReference type="TreeFam" id="TF106415"/>
<dbReference type="PathwayCommons" id="Q29RF7"/>
<dbReference type="Reactome" id="R-HSA-2467813">
    <property type="pathway name" value="Separation of Sister Chromatids"/>
</dbReference>
<dbReference type="Reactome" id="R-HSA-2468052">
    <property type="pathway name" value="Establishment of Sister Chromatid Cohesion"/>
</dbReference>
<dbReference type="Reactome" id="R-HSA-2470946">
    <property type="pathway name" value="Cohesin Loading onto Chromatin"/>
</dbReference>
<dbReference type="Reactome" id="R-HSA-2500257">
    <property type="pathway name" value="Resolution of Sister Chromatid Cohesion"/>
</dbReference>
<dbReference type="SignaLink" id="Q29RF7"/>
<dbReference type="BioGRID-ORCS" id="23244">
    <property type="hits" value="194 hits in 1161 CRISPR screens"/>
</dbReference>
<dbReference type="CD-CODE" id="91857CE7">
    <property type="entry name" value="Nucleolus"/>
</dbReference>
<dbReference type="ChiTaRS" id="PDS5A">
    <property type="organism name" value="human"/>
</dbReference>
<dbReference type="GeneWiki" id="PDS5A"/>
<dbReference type="GenomeRNAi" id="23244"/>
<dbReference type="Pharos" id="Q29RF7">
    <property type="development level" value="Tbio"/>
</dbReference>
<dbReference type="PRO" id="PR:Q29RF7"/>
<dbReference type="Proteomes" id="UP000005640">
    <property type="component" value="Chromosome 4"/>
</dbReference>
<dbReference type="RNAct" id="Q29RF7">
    <property type="molecule type" value="protein"/>
</dbReference>
<dbReference type="Bgee" id="ENSG00000121892">
    <property type="expression patterns" value="Expressed in germinal epithelium of ovary and 218 other cell types or tissues"/>
</dbReference>
<dbReference type="ExpressionAtlas" id="Q29RF7">
    <property type="expression patterns" value="baseline and differential"/>
</dbReference>
<dbReference type="GO" id="GO:0000785">
    <property type="term" value="C:chromatin"/>
    <property type="evidence" value="ECO:0000314"/>
    <property type="project" value="UniProtKB"/>
</dbReference>
<dbReference type="GO" id="GO:0005694">
    <property type="term" value="C:chromosome"/>
    <property type="evidence" value="ECO:0000304"/>
    <property type="project" value="Reactome"/>
</dbReference>
<dbReference type="GO" id="GO:0000775">
    <property type="term" value="C:chromosome, centromeric region"/>
    <property type="evidence" value="ECO:0000304"/>
    <property type="project" value="Reactome"/>
</dbReference>
<dbReference type="GO" id="GO:0005829">
    <property type="term" value="C:cytosol"/>
    <property type="evidence" value="ECO:0000304"/>
    <property type="project" value="Reactome"/>
</dbReference>
<dbReference type="GO" id="GO:0005654">
    <property type="term" value="C:nucleoplasm"/>
    <property type="evidence" value="ECO:0000314"/>
    <property type="project" value="HPA"/>
</dbReference>
<dbReference type="GO" id="GO:0005634">
    <property type="term" value="C:nucleus"/>
    <property type="evidence" value="ECO:0000318"/>
    <property type="project" value="GO_Central"/>
</dbReference>
<dbReference type="GO" id="GO:0005886">
    <property type="term" value="C:plasma membrane"/>
    <property type="evidence" value="ECO:0000314"/>
    <property type="project" value="HPA"/>
</dbReference>
<dbReference type="GO" id="GO:0051301">
    <property type="term" value="P:cell division"/>
    <property type="evidence" value="ECO:0007669"/>
    <property type="project" value="UniProtKB-KW"/>
</dbReference>
<dbReference type="GO" id="GO:0006281">
    <property type="term" value="P:DNA repair"/>
    <property type="evidence" value="ECO:0000318"/>
    <property type="project" value="GO_Central"/>
</dbReference>
<dbReference type="GO" id="GO:0007064">
    <property type="term" value="P:mitotic sister chromatid cohesion"/>
    <property type="evidence" value="ECO:0000353"/>
    <property type="project" value="UniProtKB"/>
</dbReference>
<dbReference type="GO" id="GO:0008156">
    <property type="term" value="P:negative regulation of DNA replication"/>
    <property type="evidence" value="ECO:0000315"/>
    <property type="project" value="UniProtKB"/>
</dbReference>
<dbReference type="CDD" id="cd19953">
    <property type="entry name" value="PDS5"/>
    <property type="match status" value="1"/>
</dbReference>
<dbReference type="FunFam" id="1.25.10.10:FF:001146">
    <property type="entry name" value="PDS5 cohesin associated factor B"/>
    <property type="match status" value="1"/>
</dbReference>
<dbReference type="FunFam" id="1.25.10.10:FF:000064">
    <property type="entry name" value="Sister chromatid cohesion protein PDS5 homolog A"/>
    <property type="match status" value="1"/>
</dbReference>
<dbReference type="Gene3D" id="1.25.10.10">
    <property type="entry name" value="Leucine-rich Repeat Variant"/>
    <property type="match status" value="2"/>
</dbReference>
<dbReference type="InterPro" id="IPR011989">
    <property type="entry name" value="ARM-like"/>
</dbReference>
<dbReference type="InterPro" id="IPR016024">
    <property type="entry name" value="ARM-type_fold"/>
</dbReference>
<dbReference type="InterPro" id="IPR039776">
    <property type="entry name" value="Pds5"/>
</dbReference>
<dbReference type="PANTHER" id="PTHR12663">
    <property type="entry name" value="ANDROGEN INDUCED INHIBITOR OF PROLIFERATION AS3 / PDS5-RELATED"/>
    <property type="match status" value="1"/>
</dbReference>
<dbReference type="PANTHER" id="PTHR12663:SF2">
    <property type="entry name" value="SISTER CHROMATID COHESION PROTEIN PDS5 HOMOLOG A"/>
    <property type="match status" value="1"/>
</dbReference>
<dbReference type="Pfam" id="PF20168">
    <property type="entry name" value="PDS5"/>
    <property type="match status" value="1"/>
</dbReference>
<dbReference type="SUPFAM" id="SSF48371">
    <property type="entry name" value="ARM repeat"/>
    <property type="match status" value="1"/>
</dbReference>
<sequence>MDFTAQPKPATALCGVVSADGKIAYPPGVKEITDKITTDEMIKRLKMVVKTFMDMDQDSEDEKQQYLPLALHLASEFFLRNPNKDVRLLVACCLADIFRIYAPEAPYTSHDKLKDIFLFITRQLKGLEDTKSPQFNRYFYLLENLAWVKSYNICFELEDCNEIFIQLFRTLFSVINNSHNKKVQMHMLDLMSSIIMEGDGVTQELLDSILINLIPAHKNLNKQSFDLAKVLLKRTVQTIEACIANFFNQVLVLGRSSVSDLSEHVFDLIQELFAIDPHLLLSVMPQLEFKLKSNDGEERLAVVRLLAKLFGSKDSDLATQNRPLWQCFLGRFNDIHVPVRLESVKFASHCLMNHPDLAKDLTEYLKVRSHDPEEAIRHDVIVTIITAAKRDLALVNDQLLGFVRERTLDKRWRVRKEAMMGLAQLYKKYCLHGEAGKEAAEKVSWIKDKLLHIYYQNSIDDKLLVEKIFAQYLVPHNLETEERMKCLYYLYASLDPNAVKALNEMWKCQNMLRSHVRELLDLHKQPTSEANCSAMFGKLMTIAKNLPDPGKAQDFVKKFNQVLGDDEKLRSQLELLISPTCSCKQADICVREIARKLANPKQPTNPFLEMVKFLLERIAPVHIDSEAISALVKLMNKSIEGTADDEEEGVSPDTAIRSGLELLKVLSFTHPTSFHSAETYESLLQCLRMEDDKVAEAAIQIFRNTGHKIETDLPQIRSTLIPILHQKAKRGTPHQAKQAVHCIHAIFTNKEVQLAQIFEPLSRSLNADVPEQLITPLVSLGHISMLAPDQFASPMKSVVANFIVKDLLMNDRSTGEKNGKLWSPDEEVSPEVLAKVQAIKLLVRWLLGMKNNQSKSANSTLRLLSAMLVSEGDLTEQKRISKSDMSRLRLAAGSAIMKLAQEPCYHEIITPEQFQLCALVINDECYQVRQIFAQKLHKALVKLLLPLEYMAIFALCAKDPVKERRAHARQCLLKNISIRREYIKQNPMATEKLLSLLPEYVVPYMIHLLAHDPDFTRSQDVDQLRDIKECLWFMLEVLMTKNENNSHAFMKKMAENIKLTRDAQSPDESKTNEKLYTVCDVALCVINSKSALCNADSPKDPVLPMKFFTQPEKDFCNDKSYISEETRVLLLTGKPKPAGVLGAVNKPLSATGRKPYVRSTGTETGSNINVNSELNPSTGNRSREQSSEAAETGVSENEENPVRIISVTPVKNIDPVKNKEINSDQATQGNISSDRGKKRTVTAAGAENIQQKTDEKVDESGPPAPSKPRRGRRPKSESQGNATKNDDLNKPINKGRKRAAVGQESPGGLEAGNAKAPKLQDLAKKAAPAERQIDLQR</sequence>
<proteinExistence type="evidence at protein level"/>
<organism>
    <name type="scientific">Homo sapiens</name>
    <name type="common">Human</name>
    <dbReference type="NCBI Taxonomy" id="9606"/>
    <lineage>
        <taxon>Eukaryota</taxon>
        <taxon>Metazoa</taxon>
        <taxon>Chordata</taxon>
        <taxon>Craniata</taxon>
        <taxon>Vertebrata</taxon>
        <taxon>Euteleostomi</taxon>
        <taxon>Mammalia</taxon>
        <taxon>Eutheria</taxon>
        <taxon>Euarchontoglires</taxon>
        <taxon>Primates</taxon>
        <taxon>Haplorrhini</taxon>
        <taxon>Catarrhini</taxon>
        <taxon>Hominidae</taxon>
        <taxon>Homo</taxon>
    </lineage>
</organism>
<protein>
    <recommendedName>
        <fullName>Sister chromatid cohesion protein PDS5 homolog A</fullName>
    </recommendedName>
    <alternativeName>
        <fullName>Cell proliferation-inducing gene 54 protein</fullName>
    </alternativeName>
    <alternativeName>
        <fullName>Sister chromatid cohesion protein 112</fullName>
        <shortName>SCC-112</shortName>
    </alternativeName>
</protein>